<gene>
    <name evidence="2" type="primary">ifi30</name>
    <name evidence="7" type="synonym">GILT</name>
</gene>
<sequence length="251" mass="27803">MFGFRLSVLLFAVCSLSACSCMFVNSCKYPPSQWCDSRDIAAQCGVLEQCMKFNASPVTVSLYYESLCPGCREFLVSQLVPTFIMLSDIMNIELVPYGNAQEKDDQGNYTFICQHGEDECRGNMIETCLLKALGPKAIPVIFCMESGADVLKAAQPCLGVYFPDTTWDSVMKCVTGDEGNKLMHQNALKTNALKPPHEYVPWITINGEHTDDLQDKATNSLFNLVCSLYKGEKPAACGQGLKKRTNSYCMN</sequence>
<proteinExistence type="evidence at protein level"/>
<keyword id="KW-1015">Disulfide bond</keyword>
<keyword id="KW-0325">Glycoprotein</keyword>
<keyword id="KW-0391">Immunity</keyword>
<keyword id="KW-0458">Lysosome</keyword>
<keyword id="KW-0560">Oxidoreductase</keyword>
<keyword id="KW-0676">Redox-active center</keyword>
<keyword id="KW-1185">Reference proteome</keyword>
<keyword id="KW-0964">Secreted</keyword>
<keyword id="KW-0732">Signal</keyword>
<feature type="signal peptide" evidence="3">
    <location>
        <begin position="1"/>
        <end position="21"/>
    </location>
</feature>
<feature type="chain" id="PRO_5003217147" description="Gamma-interferon-inducible lysosomal thiol reductase">
    <location>
        <begin position="22"/>
        <end position="251"/>
    </location>
</feature>
<feature type="domain" description="Saposin A-type" evidence="4">
    <location>
        <begin position="22"/>
        <end position="60"/>
    </location>
</feature>
<feature type="glycosylation site" description="N-linked (GlcNAc...) asparagine" evidence="5">
    <location>
        <position position="108"/>
    </location>
</feature>
<feature type="disulfide bond" description="Redox-active" evidence="1">
    <location>
        <begin position="68"/>
        <end position="71"/>
    </location>
</feature>
<accession>E7E2N8</accession>
<dbReference type="EC" id="1.8.-.-" evidence="6"/>
<dbReference type="EMBL" id="HQ610621">
    <property type="protein sequence ID" value="ADU02196.1"/>
    <property type="molecule type" value="mRNA"/>
</dbReference>
<dbReference type="SMR" id="E7E2N8"/>
<dbReference type="GlyCosmos" id="E7E2N8">
    <property type="glycosylation" value="1 site, No reported glycans"/>
</dbReference>
<dbReference type="Proteomes" id="UP000515129">
    <property type="component" value="Unplaced"/>
</dbReference>
<dbReference type="GO" id="GO:0005576">
    <property type="term" value="C:extracellular region"/>
    <property type="evidence" value="ECO:0007669"/>
    <property type="project" value="UniProtKB-SubCell"/>
</dbReference>
<dbReference type="GO" id="GO:0005764">
    <property type="term" value="C:lysosome"/>
    <property type="evidence" value="ECO:0000314"/>
    <property type="project" value="UniProtKB"/>
</dbReference>
<dbReference type="GO" id="GO:0016671">
    <property type="term" value="F:oxidoreductase activity, acting on a sulfur group of donors, disulfide as acceptor"/>
    <property type="evidence" value="ECO:0007669"/>
    <property type="project" value="InterPro"/>
</dbReference>
<dbReference type="GO" id="GO:0047134">
    <property type="term" value="F:protein-disulfide reductase [NAD(P)H] activity"/>
    <property type="evidence" value="ECO:0000314"/>
    <property type="project" value="UniProtKB"/>
</dbReference>
<dbReference type="GO" id="GO:0019882">
    <property type="term" value="P:antigen processing and presentation"/>
    <property type="evidence" value="ECO:0000314"/>
    <property type="project" value="UniProtKB"/>
</dbReference>
<dbReference type="InterPro" id="IPR004911">
    <property type="entry name" value="Interferon-induced_GILT"/>
</dbReference>
<dbReference type="InterPro" id="IPR003119">
    <property type="entry name" value="SAP_A"/>
</dbReference>
<dbReference type="PANTHER" id="PTHR13234">
    <property type="entry name" value="GAMMA-INTERFERON INDUCIBLE LYSOSOMAL THIOL REDUCTASE GILT"/>
    <property type="match status" value="1"/>
</dbReference>
<dbReference type="PANTHER" id="PTHR13234:SF43">
    <property type="entry name" value="GAMMA-INTERFERON-INDUCIBLE LYSOSOMAL THIOL REDUCTASE"/>
    <property type="match status" value="1"/>
</dbReference>
<dbReference type="Pfam" id="PF03227">
    <property type="entry name" value="GILT"/>
    <property type="match status" value="1"/>
</dbReference>
<dbReference type="Pfam" id="PF02199">
    <property type="entry name" value="SapA"/>
    <property type="match status" value="1"/>
</dbReference>
<dbReference type="PROSITE" id="PS51110">
    <property type="entry name" value="SAP_A"/>
    <property type="match status" value="1"/>
</dbReference>
<name>GILT_CARAU</name>
<protein>
    <recommendedName>
        <fullName evidence="7">Gamma-interferon-inducible lysosomal thiol reductase</fullName>
        <ecNumber evidence="6">1.8.-.-</ecNumber>
    </recommendedName>
</protein>
<reference evidence="10" key="1">
    <citation type="journal article" date="2015" name="Fish Shellfish Immunol.">
        <title>Identification of interferon-gamma-inducible-lysosomal thiol reductase (GILT) gene in goldfish (Carassius auratus) and its immune response to LPS challenge.</title>
        <authorList>
            <person name="Li J.F."/>
            <person name="Li J."/>
            <person name="Wang Z.G."/>
            <person name="Liu H.Z."/>
            <person name="Zhao Y.L."/>
            <person name="Zhang J.X."/>
            <person name="Zhang S.Q."/>
            <person name="Liu J.P."/>
        </authorList>
    </citation>
    <scope>NUCLEOTIDE SEQUENCE [MRNA]</scope>
    <scope>FUNCTION</scope>
    <scope>CATALYTIC ACTIVITY</scope>
    <scope>SUBCELLULAR LOCATION</scope>
    <scope>TISSUE SPECIFICITY</scope>
    <scope>INDUCTION BY LPS</scope>
</reference>
<comment type="function">
    <text evidence="6">Lysosomal thiol reductase that can reduce protein disulfide bonds. May facilitate the complete unfolding of proteins destined for lysosomal degradation. Plays an important role in antigen processing.</text>
</comment>
<comment type="subunit">
    <text evidence="1">Dimer; disulfide-linked.</text>
</comment>
<comment type="subcellular location">
    <subcellularLocation>
        <location evidence="9">Secreted</location>
    </subcellularLocation>
    <subcellularLocation>
        <location evidence="6">Lysosome</location>
    </subcellularLocation>
</comment>
<comment type="tissue specificity">
    <text evidence="6">Highly expressed in spleen and kidney. Also detected at lower levels in liver, heart, brain, intestine and gill.</text>
</comment>
<comment type="induction">
    <text evidence="6">Strongly up-regulated in spleen and kidney in response to bacterial lipopolysaccharide (LPS).</text>
</comment>
<comment type="similarity">
    <text evidence="8">Belongs to the GILT family.</text>
</comment>
<evidence type="ECO:0000250" key="1">
    <source>
        <dbReference type="UniProtKB" id="P13284"/>
    </source>
</evidence>
<evidence type="ECO:0000250" key="2">
    <source>
        <dbReference type="UniProtKB" id="Q5XJN2"/>
    </source>
</evidence>
<evidence type="ECO:0000255" key="3"/>
<evidence type="ECO:0000255" key="4">
    <source>
        <dbReference type="PROSITE-ProRule" id="PRU00414"/>
    </source>
</evidence>
<evidence type="ECO:0000255" key="5">
    <source>
        <dbReference type="PROSITE-ProRule" id="PRU00498"/>
    </source>
</evidence>
<evidence type="ECO:0000269" key="6">
    <source>
    </source>
</evidence>
<evidence type="ECO:0000303" key="7">
    <source>
    </source>
</evidence>
<evidence type="ECO:0000305" key="8"/>
<evidence type="ECO:0000305" key="9">
    <source>
    </source>
</evidence>
<evidence type="ECO:0000312" key="10">
    <source>
        <dbReference type="EMBL" id="ADU02196.1"/>
    </source>
</evidence>
<organism evidence="10">
    <name type="scientific">Carassius auratus</name>
    <name type="common">Goldfish</name>
    <dbReference type="NCBI Taxonomy" id="7957"/>
    <lineage>
        <taxon>Eukaryota</taxon>
        <taxon>Metazoa</taxon>
        <taxon>Chordata</taxon>
        <taxon>Craniata</taxon>
        <taxon>Vertebrata</taxon>
        <taxon>Euteleostomi</taxon>
        <taxon>Actinopterygii</taxon>
        <taxon>Neopterygii</taxon>
        <taxon>Teleostei</taxon>
        <taxon>Ostariophysi</taxon>
        <taxon>Cypriniformes</taxon>
        <taxon>Cyprinidae</taxon>
        <taxon>Cyprininae</taxon>
        <taxon>Carassius</taxon>
    </lineage>
</organism>